<protein>
    <recommendedName>
        <fullName>Tubulin-specific chaperone C</fullName>
    </recommendedName>
    <alternativeName>
        <fullName>Chromosome instability protein 2</fullName>
    </alternativeName>
    <alternativeName>
        <fullName>Tubulin-folding cofactor C</fullName>
    </alternativeName>
</protein>
<comment type="function">
    <text>Tubulin-folding protein; involved in the early step of the tubulin folding pathway.</text>
</comment>
<comment type="subcellular location">
    <subcellularLocation>
        <location>Cytoplasm</location>
        <location>Cytoskeleton</location>
    </subcellularLocation>
</comment>
<comment type="miscellaneous">
    <text evidence="2">Present with 1630 molecules/cell.</text>
</comment>
<evidence type="ECO:0000255" key="1">
    <source>
        <dbReference type="PROSITE-ProRule" id="PRU00659"/>
    </source>
</evidence>
<evidence type="ECO:0000269" key="2">
    <source>
    </source>
</evidence>
<evidence type="ECO:0000305" key="3"/>
<evidence type="ECO:0007829" key="4">
    <source>
        <dbReference type="PDB" id="5CYA"/>
    </source>
</evidence>
<feature type="chain" id="PRO_0000089762" description="Tubulin-specific chaperone C">
    <location>
        <begin position="1"/>
        <end position="268"/>
    </location>
</feature>
<feature type="domain" description="C-CAP/cofactor C-like" evidence="1">
    <location>
        <begin position="98"/>
        <end position="255"/>
    </location>
</feature>
<feature type="sequence conflict" description="In Ref. 1; AAA78272." evidence="3" ref="1">
    <original>E</original>
    <variation>Y</variation>
    <location>
        <position position="66"/>
    </location>
</feature>
<feature type="strand" evidence="4">
    <location>
        <begin position="103"/>
        <end position="105"/>
    </location>
</feature>
<feature type="strand" evidence="4">
    <location>
        <begin position="107"/>
        <end position="110"/>
    </location>
</feature>
<feature type="strand" evidence="4">
    <location>
        <begin position="116"/>
        <end position="122"/>
    </location>
</feature>
<feature type="strand" evidence="4">
    <location>
        <begin position="124"/>
        <end position="127"/>
    </location>
</feature>
<feature type="strand" evidence="4">
    <location>
        <begin position="136"/>
        <end position="148"/>
    </location>
</feature>
<feature type="strand" evidence="4">
    <location>
        <begin position="150"/>
        <end position="154"/>
    </location>
</feature>
<feature type="strand" evidence="4">
    <location>
        <begin position="157"/>
        <end position="170"/>
    </location>
</feature>
<feature type="strand" evidence="4">
    <location>
        <begin position="172"/>
        <end position="177"/>
    </location>
</feature>
<feature type="strand" evidence="4">
    <location>
        <begin position="184"/>
        <end position="192"/>
    </location>
</feature>
<feature type="strand" evidence="4">
    <location>
        <begin position="194"/>
        <end position="199"/>
    </location>
</feature>
<feature type="strand" evidence="4">
    <location>
        <begin position="208"/>
        <end position="214"/>
    </location>
</feature>
<feature type="strand" evidence="4">
    <location>
        <begin position="216"/>
        <end position="221"/>
    </location>
</feature>
<feature type="helix" evidence="4">
    <location>
        <begin position="222"/>
        <end position="227"/>
    </location>
</feature>
<feature type="strand" evidence="4">
    <location>
        <begin position="228"/>
        <end position="232"/>
    </location>
</feature>
<feature type="strand" evidence="4">
    <location>
        <begin position="248"/>
        <end position="251"/>
    </location>
</feature>
<feature type="helix" evidence="4">
    <location>
        <begin position="256"/>
        <end position="258"/>
    </location>
</feature>
<feature type="helix" evidence="4">
    <location>
        <begin position="260"/>
        <end position="267"/>
    </location>
</feature>
<sequence>MDFTAKIKELERELSETSDYKTLQKKTISLRSELNTLSHSLTSYEKEHFSNDIENVLKSINAKLSESKGKKRLFSFKQKNSSSAVHKNVERTELANAPAYTTTLKKHYVLEKGDSAFENLEFCTVTSTTDYSGNSALSGSLCFRNITKCVINLQRIFFQTGSIFITDCTDSIIFLRSPSDKDFQIRLRDLKNCKILIEKLSPSIDCKQVVIIENCHKCIFNASTRDHLIIQDFSNPFQSEETEDNSAFAFEDFDICNKDTMQLFRAYL</sequence>
<accession>P46670</accession>
<accession>D6W3D0</accession>
<accession>Q08973</accession>
<keyword id="KW-0002">3D-structure</keyword>
<keyword id="KW-0143">Chaperone</keyword>
<keyword id="KW-0963">Cytoplasm</keyword>
<keyword id="KW-0206">Cytoskeleton</keyword>
<keyword id="KW-0493">Microtubule</keyword>
<keyword id="KW-1185">Reference proteome</keyword>
<name>TBCC_YEAST</name>
<reference key="1">
    <citation type="submission" date="1995-08" db="EMBL/GenBank/DDBJ databases">
        <authorList>
            <person name="Stearns T."/>
            <person name="Kwon D."/>
            <person name="Shin K."/>
        </authorList>
    </citation>
    <scope>NUCLEOTIDE SEQUENCE [GENOMIC DNA]</scope>
</reference>
<reference key="2">
    <citation type="journal article" date="1997" name="Nature">
        <title>The nucleotide sequence of Saccharomyces cerevisiae chromosome XVI.</title>
        <authorList>
            <person name="Bussey H."/>
            <person name="Storms R.K."/>
            <person name="Ahmed A."/>
            <person name="Albermann K."/>
            <person name="Allen E."/>
            <person name="Ansorge W."/>
            <person name="Araujo R."/>
            <person name="Aparicio A."/>
            <person name="Barrell B.G."/>
            <person name="Badcock K."/>
            <person name="Benes V."/>
            <person name="Botstein D."/>
            <person name="Bowman S."/>
            <person name="Brueckner M."/>
            <person name="Carpenter J."/>
            <person name="Cherry J.M."/>
            <person name="Chung E."/>
            <person name="Churcher C.M."/>
            <person name="Coster F."/>
            <person name="Davis K."/>
            <person name="Davis R.W."/>
            <person name="Dietrich F.S."/>
            <person name="Delius H."/>
            <person name="DiPaolo T."/>
            <person name="Dubois E."/>
            <person name="Duesterhoeft A."/>
            <person name="Duncan M."/>
            <person name="Floeth M."/>
            <person name="Fortin N."/>
            <person name="Friesen J.D."/>
            <person name="Fritz C."/>
            <person name="Goffeau A."/>
            <person name="Hall J."/>
            <person name="Hebling U."/>
            <person name="Heumann K."/>
            <person name="Hilbert H."/>
            <person name="Hillier L.W."/>
            <person name="Hunicke-Smith S."/>
            <person name="Hyman R.W."/>
            <person name="Johnston M."/>
            <person name="Kalman S."/>
            <person name="Kleine K."/>
            <person name="Komp C."/>
            <person name="Kurdi O."/>
            <person name="Lashkari D."/>
            <person name="Lew H."/>
            <person name="Lin A."/>
            <person name="Lin D."/>
            <person name="Louis E.J."/>
            <person name="Marathe R."/>
            <person name="Messenguy F."/>
            <person name="Mewes H.-W."/>
            <person name="Mirtipati S."/>
            <person name="Moestl D."/>
            <person name="Mueller-Auer S."/>
            <person name="Namath A."/>
            <person name="Nentwich U."/>
            <person name="Oefner P."/>
            <person name="Pearson D."/>
            <person name="Petel F.X."/>
            <person name="Pohl T.M."/>
            <person name="Purnelle B."/>
            <person name="Rajandream M.A."/>
            <person name="Rechmann S."/>
            <person name="Rieger M."/>
            <person name="Riles L."/>
            <person name="Roberts D."/>
            <person name="Schaefer M."/>
            <person name="Scharfe M."/>
            <person name="Scherens B."/>
            <person name="Schramm S."/>
            <person name="Schroeder M."/>
            <person name="Sdicu A.-M."/>
            <person name="Tettelin H."/>
            <person name="Urrestarazu L.A."/>
            <person name="Ushinsky S."/>
            <person name="Vierendeels F."/>
            <person name="Vissers S."/>
            <person name="Voss H."/>
            <person name="Walsh S.V."/>
            <person name="Wambutt R."/>
            <person name="Wang Y."/>
            <person name="Wedler E."/>
            <person name="Wedler H."/>
            <person name="Winnett E."/>
            <person name="Zhong W.-W."/>
            <person name="Zollner A."/>
            <person name="Vo D.H."/>
            <person name="Hani J."/>
        </authorList>
    </citation>
    <scope>NUCLEOTIDE SEQUENCE [LARGE SCALE GENOMIC DNA]</scope>
    <source>
        <strain>ATCC 204508 / S288c</strain>
    </source>
</reference>
<reference key="3">
    <citation type="journal article" date="2014" name="G3 (Bethesda)">
        <title>The reference genome sequence of Saccharomyces cerevisiae: Then and now.</title>
        <authorList>
            <person name="Engel S.R."/>
            <person name="Dietrich F.S."/>
            <person name="Fisk D.G."/>
            <person name="Binkley G."/>
            <person name="Balakrishnan R."/>
            <person name="Costanzo M.C."/>
            <person name="Dwight S.S."/>
            <person name="Hitz B.C."/>
            <person name="Karra K."/>
            <person name="Nash R.S."/>
            <person name="Weng S."/>
            <person name="Wong E.D."/>
            <person name="Lloyd P."/>
            <person name="Skrzypek M.S."/>
            <person name="Miyasato S.R."/>
            <person name="Simison M."/>
            <person name="Cherry J.M."/>
        </authorList>
    </citation>
    <scope>GENOME REANNOTATION</scope>
    <source>
        <strain>ATCC 204508 / S288c</strain>
    </source>
</reference>
<reference key="4">
    <citation type="journal article" date="2003" name="Nature">
        <title>Global analysis of protein expression in yeast.</title>
        <authorList>
            <person name="Ghaemmaghami S."/>
            <person name="Huh W.-K."/>
            <person name="Bower K."/>
            <person name="Howson R.W."/>
            <person name="Belle A."/>
            <person name="Dephoure N."/>
            <person name="O'Shea E.K."/>
            <person name="Weissman J.S."/>
        </authorList>
    </citation>
    <scope>LEVEL OF PROTEIN EXPRESSION [LARGE SCALE ANALYSIS]</scope>
</reference>
<reference key="5">
    <citation type="journal article" date="2012" name="Proc. Natl. Acad. Sci. U.S.A.">
        <title>N-terminal acetylome analyses and functional insights of the N-terminal acetyltransferase NatB.</title>
        <authorList>
            <person name="Van Damme P."/>
            <person name="Lasa M."/>
            <person name="Polevoda B."/>
            <person name="Gazquez C."/>
            <person name="Elosegui-Artola A."/>
            <person name="Kim D.S."/>
            <person name="De Juan-Pardo E."/>
            <person name="Demeyer K."/>
            <person name="Hole K."/>
            <person name="Larrea E."/>
            <person name="Timmerman E."/>
            <person name="Prieto J."/>
            <person name="Arnesen T."/>
            <person name="Sherman F."/>
            <person name="Gevaert K."/>
            <person name="Aldabe R."/>
        </authorList>
    </citation>
    <scope>IDENTIFICATION BY MASS SPECTROMETRY [LARGE SCALE ANALYSIS]</scope>
</reference>
<organism>
    <name type="scientific">Saccharomyces cerevisiae (strain ATCC 204508 / S288c)</name>
    <name type="common">Baker's yeast</name>
    <dbReference type="NCBI Taxonomy" id="559292"/>
    <lineage>
        <taxon>Eukaryota</taxon>
        <taxon>Fungi</taxon>
        <taxon>Dikarya</taxon>
        <taxon>Ascomycota</taxon>
        <taxon>Saccharomycotina</taxon>
        <taxon>Saccharomycetes</taxon>
        <taxon>Saccharomycetales</taxon>
        <taxon>Saccharomycetaceae</taxon>
        <taxon>Saccharomyces</taxon>
    </lineage>
</organism>
<gene>
    <name type="primary">CIN2</name>
    <name type="ordered locus">YPL241C</name>
    <name type="ORF">P1043</name>
</gene>
<proteinExistence type="evidence at protein level"/>
<dbReference type="EMBL" id="U34961">
    <property type="protein sequence ID" value="AAA78272.1"/>
    <property type="molecule type" value="Genomic_DNA"/>
</dbReference>
<dbReference type="EMBL" id="Z73597">
    <property type="protein sequence ID" value="CAA97962.1"/>
    <property type="molecule type" value="Genomic_DNA"/>
</dbReference>
<dbReference type="EMBL" id="BK006949">
    <property type="protein sequence ID" value="DAA11196.1"/>
    <property type="molecule type" value="Genomic_DNA"/>
</dbReference>
<dbReference type="PIR" id="S65270">
    <property type="entry name" value="S65270"/>
</dbReference>
<dbReference type="RefSeq" id="NP_015083.1">
    <property type="nucleotide sequence ID" value="NM_001184055.1"/>
</dbReference>
<dbReference type="PDB" id="5CYA">
    <property type="method" value="X-ray"/>
    <property type="resolution" value="2.00 A"/>
    <property type="chains" value="A/B=1-268"/>
</dbReference>
<dbReference type="PDBsum" id="5CYA"/>
<dbReference type="SMR" id="P46670"/>
<dbReference type="BioGRID" id="35922">
    <property type="interactions" value="262"/>
</dbReference>
<dbReference type="DIP" id="DIP-3960N"/>
<dbReference type="FunCoup" id="P46670">
    <property type="interactions" value="74"/>
</dbReference>
<dbReference type="IntAct" id="P46670">
    <property type="interactions" value="1"/>
</dbReference>
<dbReference type="STRING" id="4932.YPL241C"/>
<dbReference type="iPTMnet" id="P46670"/>
<dbReference type="PaxDb" id="4932-YPL241C"/>
<dbReference type="PeptideAtlas" id="P46670"/>
<dbReference type="EnsemblFungi" id="YPL241C_mRNA">
    <property type="protein sequence ID" value="YPL241C"/>
    <property type="gene ID" value="YPL241C"/>
</dbReference>
<dbReference type="GeneID" id="855835"/>
<dbReference type="KEGG" id="sce:YPL241C"/>
<dbReference type="AGR" id="SGD:S000006162"/>
<dbReference type="SGD" id="S000006162">
    <property type="gene designation" value="CIN2"/>
</dbReference>
<dbReference type="VEuPathDB" id="FungiDB:YPL241C"/>
<dbReference type="eggNOG" id="ENOG502S4TX">
    <property type="taxonomic scope" value="Eukaryota"/>
</dbReference>
<dbReference type="HOGENOM" id="CLU_095426_0_0_1"/>
<dbReference type="InParanoid" id="P46670"/>
<dbReference type="OMA" id="RIVMERC"/>
<dbReference type="OrthoDB" id="4035763at2759"/>
<dbReference type="BioCyc" id="YEAST:G3O-34127-MONOMER"/>
<dbReference type="BioGRID-ORCS" id="855835">
    <property type="hits" value="0 hits in 10 CRISPR screens"/>
</dbReference>
<dbReference type="EvolutionaryTrace" id="P46670"/>
<dbReference type="PRO" id="PR:P46670"/>
<dbReference type="Proteomes" id="UP000002311">
    <property type="component" value="Chromosome XVI"/>
</dbReference>
<dbReference type="RNAct" id="P46670">
    <property type="molecule type" value="protein"/>
</dbReference>
<dbReference type="GO" id="GO:0005737">
    <property type="term" value="C:cytoplasm"/>
    <property type="evidence" value="ECO:0000318"/>
    <property type="project" value="GO_Central"/>
</dbReference>
<dbReference type="GO" id="GO:0005874">
    <property type="term" value="C:microtubule"/>
    <property type="evidence" value="ECO:0007669"/>
    <property type="project" value="UniProtKB-KW"/>
</dbReference>
<dbReference type="GO" id="GO:0005096">
    <property type="term" value="F:GTPase activator activity"/>
    <property type="evidence" value="ECO:0000314"/>
    <property type="project" value="SGD"/>
</dbReference>
<dbReference type="GO" id="GO:0060090">
    <property type="term" value="F:molecular adaptor activity"/>
    <property type="evidence" value="ECO:0000269"/>
    <property type="project" value="DisProt"/>
</dbReference>
<dbReference type="GO" id="GO:0036094">
    <property type="term" value="F:small molecule binding"/>
    <property type="evidence" value="ECO:0000269"/>
    <property type="project" value="DisProt"/>
</dbReference>
<dbReference type="GO" id="GO:0007023">
    <property type="term" value="P:post-chaperonin tubulin folding pathway"/>
    <property type="evidence" value="ECO:0007669"/>
    <property type="project" value="InterPro"/>
</dbReference>
<dbReference type="GO" id="GO:0006457">
    <property type="term" value="P:protein folding"/>
    <property type="evidence" value="ECO:0000316"/>
    <property type="project" value="SGD"/>
</dbReference>
<dbReference type="GO" id="GO:0007021">
    <property type="term" value="P:tubulin complex assembly"/>
    <property type="evidence" value="ECO:0000315"/>
    <property type="project" value="SGD"/>
</dbReference>
<dbReference type="DisProt" id="DP00778"/>
<dbReference type="Gene3D" id="2.160.20.70">
    <property type="match status" value="1"/>
</dbReference>
<dbReference type="InterPro" id="IPR017901">
    <property type="entry name" value="C-CAP_CF_C-like"/>
</dbReference>
<dbReference type="InterPro" id="IPR016098">
    <property type="entry name" value="CAP/MinC_C"/>
</dbReference>
<dbReference type="InterPro" id="IPR027684">
    <property type="entry name" value="TBCC"/>
</dbReference>
<dbReference type="PANTHER" id="PTHR15139">
    <property type="entry name" value="TUBULIN FOLDING COFACTOR C"/>
    <property type="match status" value="1"/>
</dbReference>
<dbReference type="PANTHER" id="PTHR15139:SF0">
    <property type="entry name" value="TUBULIN-SPECIFIC CHAPERONE C"/>
    <property type="match status" value="1"/>
</dbReference>
<dbReference type="PROSITE" id="PS51329">
    <property type="entry name" value="C_CAP_COFACTOR_C"/>
    <property type="match status" value="1"/>
</dbReference>